<feature type="chain" id="PRO_1000118850" description="4-hydroxy-tetrahydrodipicolinate reductase">
    <location>
        <begin position="1"/>
        <end position="275"/>
    </location>
</feature>
<feature type="active site" description="Proton donor/acceptor" evidence="1">
    <location>
        <position position="164"/>
    </location>
</feature>
<feature type="active site" description="Proton donor" evidence="1">
    <location>
        <position position="168"/>
    </location>
</feature>
<feature type="binding site" evidence="1">
    <location>
        <begin position="13"/>
        <end position="18"/>
    </location>
    <ligand>
        <name>NAD(+)</name>
        <dbReference type="ChEBI" id="CHEBI:57540"/>
    </ligand>
</feature>
<feature type="binding site" evidence="1">
    <location>
        <begin position="108"/>
        <end position="110"/>
    </location>
    <ligand>
        <name>NAD(+)</name>
        <dbReference type="ChEBI" id="CHEBI:57540"/>
    </ligand>
</feature>
<feature type="binding site" evidence="1">
    <location>
        <position position="165"/>
    </location>
    <ligand>
        <name>(S)-2,3,4,5-tetrahydrodipicolinate</name>
        <dbReference type="ChEBI" id="CHEBI:16845"/>
    </ligand>
</feature>
<feature type="binding site" evidence="1">
    <location>
        <begin position="174"/>
        <end position="175"/>
    </location>
    <ligand>
        <name>(S)-2,3,4,5-tetrahydrodipicolinate</name>
        <dbReference type="ChEBI" id="CHEBI:16845"/>
    </ligand>
</feature>
<sequence length="275" mass="29246">MTNQGAIPVIVNGAAGKMGREVVKAVAQAADLTLFGAVDRNPSLQGQDIGEVVGIGPLEVPLLADLQSLLVAAAQEPQAGVMVDFTHPNSVYDNVRMAIAYGVRPVVGTTGLSPEQIRDLATFADKASMGCLIIPNFSIGMVLLQQAAIQASQYFDHVEIIELHHNQKADAPSGTALQTAQLLAELGKTYNPPAVKETEHLAGARGSLAEEGIRIHSVRLPGLIAHQEVIFGAPGQVYTLRHDTSDRSCYMPGVLLAIRKVMNLETVVYGLEKIL</sequence>
<evidence type="ECO:0000255" key="1">
    <source>
        <dbReference type="HAMAP-Rule" id="MF_00102"/>
    </source>
</evidence>
<evidence type="ECO:0000305" key="2"/>
<proteinExistence type="inferred from homology"/>
<reference key="1">
    <citation type="journal article" date="2011" name="MBio">
        <title>Novel metabolic attributes of the genus Cyanothece, comprising a group of unicellular nitrogen-fixing Cyanobacteria.</title>
        <authorList>
            <person name="Bandyopadhyay A."/>
            <person name="Elvitigala T."/>
            <person name="Welsh E."/>
            <person name="Stockel J."/>
            <person name="Liberton M."/>
            <person name="Min H."/>
            <person name="Sherman L.A."/>
            <person name="Pakrasi H.B."/>
        </authorList>
    </citation>
    <scope>NUCLEOTIDE SEQUENCE [LARGE SCALE GENOMIC DNA]</scope>
    <source>
        <strain>PCC 7425 / ATCC 29141</strain>
    </source>
</reference>
<organism>
    <name type="scientific">Cyanothece sp. (strain PCC 7425 / ATCC 29141)</name>
    <dbReference type="NCBI Taxonomy" id="395961"/>
    <lineage>
        <taxon>Bacteria</taxon>
        <taxon>Bacillati</taxon>
        <taxon>Cyanobacteriota</taxon>
        <taxon>Cyanophyceae</taxon>
        <taxon>Gomontiellales</taxon>
        <taxon>Cyanothecaceae</taxon>
        <taxon>Cyanothece</taxon>
    </lineage>
</organism>
<gene>
    <name evidence="1" type="primary">dapB</name>
    <name type="ordered locus">Cyan7425_3555</name>
</gene>
<accession>B8HRK9</accession>
<keyword id="KW-0028">Amino-acid biosynthesis</keyword>
<keyword id="KW-0963">Cytoplasm</keyword>
<keyword id="KW-0220">Diaminopimelate biosynthesis</keyword>
<keyword id="KW-0457">Lysine biosynthesis</keyword>
<keyword id="KW-0520">NAD</keyword>
<keyword id="KW-0521">NADP</keyword>
<keyword id="KW-0560">Oxidoreductase</keyword>
<name>DAPB_CYAP4</name>
<comment type="function">
    <text evidence="1">Catalyzes the conversion of 4-hydroxy-tetrahydrodipicolinate (HTPA) to tetrahydrodipicolinate.</text>
</comment>
<comment type="catalytic activity">
    <reaction evidence="1">
        <text>(S)-2,3,4,5-tetrahydrodipicolinate + NAD(+) + H2O = (2S,4S)-4-hydroxy-2,3,4,5-tetrahydrodipicolinate + NADH + H(+)</text>
        <dbReference type="Rhea" id="RHEA:35323"/>
        <dbReference type="ChEBI" id="CHEBI:15377"/>
        <dbReference type="ChEBI" id="CHEBI:15378"/>
        <dbReference type="ChEBI" id="CHEBI:16845"/>
        <dbReference type="ChEBI" id="CHEBI:57540"/>
        <dbReference type="ChEBI" id="CHEBI:57945"/>
        <dbReference type="ChEBI" id="CHEBI:67139"/>
        <dbReference type="EC" id="1.17.1.8"/>
    </reaction>
</comment>
<comment type="catalytic activity">
    <reaction evidence="1">
        <text>(S)-2,3,4,5-tetrahydrodipicolinate + NADP(+) + H2O = (2S,4S)-4-hydroxy-2,3,4,5-tetrahydrodipicolinate + NADPH + H(+)</text>
        <dbReference type="Rhea" id="RHEA:35331"/>
        <dbReference type="ChEBI" id="CHEBI:15377"/>
        <dbReference type="ChEBI" id="CHEBI:15378"/>
        <dbReference type="ChEBI" id="CHEBI:16845"/>
        <dbReference type="ChEBI" id="CHEBI:57783"/>
        <dbReference type="ChEBI" id="CHEBI:58349"/>
        <dbReference type="ChEBI" id="CHEBI:67139"/>
        <dbReference type="EC" id="1.17.1.8"/>
    </reaction>
</comment>
<comment type="pathway">
    <text evidence="1">Amino-acid biosynthesis; L-lysine biosynthesis via DAP pathway; (S)-tetrahydrodipicolinate from L-aspartate: step 4/4.</text>
</comment>
<comment type="subcellular location">
    <subcellularLocation>
        <location evidence="1">Cytoplasm</location>
    </subcellularLocation>
</comment>
<comment type="similarity">
    <text evidence="1">Belongs to the DapB family.</text>
</comment>
<comment type="caution">
    <text evidence="2">Was originally thought to be a dihydrodipicolinate reductase (DHDPR), catalyzing the conversion of dihydrodipicolinate to tetrahydrodipicolinate. However, it was shown in E.coli that the substrate of the enzymatic reaction is not dihydrodipicolinate (DHDP) but in fact (2S,4S)-4-hydroxy-2,3,4,5-tetrahydrodipicolinic acid (HTPA), the product released by the DapA-catalyzed reaction.</text>
</comment>
<dbReference type="EC" id="1.17.1.8" evidence="1"/>
<dbReference type="EMBL" id="CP001344">
    <property type="protein sequence ID" value="ACL45876.1"/>
    <property type="molecule type" value="Genomic_DNA"/>
</dbReference>
<dbReference type="SMR" id="B8HRK9"/>
<dbReference type="STRING" id="395961.Cyan7425_3555"/>
<dbReference type="KEGG" id="cyn:Cyan7425_3555"/>
<dbReference type="eggNOG" id="COG0289">
    <property type="taxonomic scope" value="Bacteria"/>
</dbReference>
<dbReference type="HOGENOM" id="CLU_047479_0_1_3"/>
<dbReference type="OrthoDB" id="9790352at2"/>
<dbReference type="UniPathway" id="UPA00034">
    <property type="reaction ID" value="UER00018"/>
</dbReference>
<dbReference type="GO" id="GO:0005829">
    <property type="term" value="C:cytosol"/>
    <property type="evidence" value="ECO:0007669"/>
    <property type="project" value="TreeGrafter"/>
</dbReference>
<dbReference type="GO" id="GO:0008839">
    <property type="term" value="F:4-hydroxy-tetrahydrodipicolinate reductase"/>
    <property type="evidence" value="ECO:0007669"/>
    <property type="project" value="UniProtKB-EC"/>
</dbReference>
<dbReference type="GO" id="GO:0051287">
    <property type="term" value="F:NAD binding"/>
    <property type="evidence" value="ECO:0007669"/>
    <property type="project" value="UniProtKB-UniRule"/>
</dbReference>
<dbReference type="GO" id="GO:0050661">
    <property type="term" value="F:NADP binding"/>
    <property type="evidence" value="ECO:0007669"/>
    <property type="project" value="UniProtKB-UniRule"/>
</dbReference>
<dbReference type="GO" id="GO:0016726">
    <property type="term" value="F:oxidoreductase activity, acting on CH or CH2 groups, NAD or NADP as acceptor"/>
    <property type="evidence" value="ECO:0007669"/>
    <property type="project" value="UniProtKB-UniRule"/>
</dbReference>
<dbReference type="GO" id="GO:0019877">
    <property type="term" value="P:diaminopimelate biosynthetic process"/>
    <property type="evidence" value="ECO:0007669"/>
    <property type="project" value="UniProtKB-UniRule"/>
</dbReference>
<dbReference type="GO" id="GO:0009089">
    <property type="term" value="P:lysine biosynthetic process via diaminopimelate"/>
    <property type="evidence" value="ECO:0007669"/>
    <property type="project" value="UniProtKB-UniRule"/>
</dbReference>
<dbReference type="CDD" id="cd02274">
    <property type="entry name" value="DHDPR_N"/>
    <property type="match status" value="1"/>
</dbReference>
<dbReference type="FunFam" id="3.30.360.10:FF:000009">
    <property type="entry name" value="4-hydroxy-tetrahydrodipicolinate reductase"/>
    <property type="match status" value="1"/>
</dbReference>
<dbReference type="Gene3D" id="3.30.360.10">
    <property type="entry name" value="Dihydrodipicolinate Reductase, domain 2"/>
    <property type="match status" value="1"/>
</dbReference>
<dbReference type="Gene3D" id="3.40.50.720">
    <property type="entry name" value="NAD(P)-binding Rossmann-like Domain"/>
    <property type="match status" value="1"/>
</dbReference>
<dbReference type="HAMAP" id="MF_00102">
    <property type="entry name" value="DapB"/>
    <property type="match status" value="1"/>
</dbReference>
<dbReference type="InterPro" id="IPR022663">
    <property type="entry name" value="DapB_C"/>
</dbReference>
<dbReference type="InterPro" id="IPR000846">
    <property type="entry name" value="DapB_N"/>
</dbReference>
<dbReference type="InterPro" id="IPR022664">
    <property type="entry name" value="DapB_N_CS"/>
</dbReference>
<dbReference type="InterPro" id="IPR023940">
    <property type="entry name" value="DHDPR_bac"/>
</dbReference>
<dbReference type="InterPro" id="IPR036291">
    <property type="entry name" value="NAD(P)-bd_dom_sf"/>
</dbReference>
<dbReference type="NCBIfam" id="TIGR00036">
    <property type="entry name" value="dapB"/>
    <property type="match status" value="1"/>
</dbReference>
<dbReference type="PANTHER" id="PTHR20836:SF0">
    <property type="entry name" value="4-HYDROXY-TETRAHYDRODIPICOLINATE REDUCTASE 1, CHLOROPLASTIC-RELATED"/>
    <property type="match status" value="1"/>
</dbReference>
<dbReference type="PANTHER" id="PTHR20836">
    <property type="entry name" value="DIHYDRODIPICOLINATE REDUCTASE"/>
    <property type="match status" value="1"/>
</dbReference>
<dbReference type="Pfam" id="PF05173">
    <property type="entry name" value="DapB_C"/>
    <property type="match status" value="1"/>
</dbReference>
<dbReference type="Pfam" id="PF01113">
    <property type="entry name" value="DapB_N"/>
    <property type="match status" value="1"/>
</dbReference>
<dbReference type="PIRSF" id="PIRSF000161">
    <property type="entry name" value="DHPR"/>
    <property type="match status" value="1"/>
</dbReference>
<dbReference type="SUPFAM" id="SSF55347">
    <property type="entry name" value="Glyceraldehyde-3-phosphate dehydrogenase-like, C-terminal domain"/>
    <property type="match status" value="1"/>
</dbReference>
<dbReference type="SUPFAM" id="SSF51735">
    <property type="entry name" value="NAD(P)-binding Rossmann-fold domains"/>
    <property type="match status" value="1"/>
</dbReference>
<dbReference type="PROSITE" id="PS01298">
    <property type="entry name" value="DAPB"/>
    <property type="match status" value="1"/>
</dbReference>
<protein>
    <recommendedName>
        <fullName evidence="1">4-hydroxy-tetrahydrodipicolinate reductase</fullName>
        <shortName evidence="1">HTPA reductase</shortName>
        <ecNumber evidence="1">1.17.1.8</ecNumber>
    </recommendedName>
</protein>